<gene>
    <name evidence="1" type="primary">rplV</name>
    <name type="ordered locus">BCG9842_B5190</name>
</gene>
<reference key="1">
    <citation type="submission" date="2008-10" db="EMBL/GenBank/DDBJ databases">
        <title>Genome sequence of Bacillus cereus G9842.</title>
        <authorList>
            <person name="Dodson R.J."/>
            <person name="Durkin A.S."/>
            <person name="Rosovitz M.J."/>
            <person name="Rasko D.A."/>
            <person name="Hoffmaster A."/>
            <person name="Ravel J."/>
            <person name="Sutton G."/>
        </authorList>
    </citation>
    <scope>NUCLEOTIDE SEQUENCE [LARGE SCALE GENOMIC DNA]</scope>
    <source>
        <strain>G9842</strain>
    </source>
</reference>
<dbReference type="EMBL" id="CP001186">
    <property type="protein sequence ID" value="ACK98299.1"/>
    <property type="molecule type" value="Genomic_DNA"/>
</dbReference>
<dbReference type="RefSeq" id="WP_001148024.1">
    <property type="nucleotide sequence ID" value="NC_011772.1"/>
</dbReference>
<dbReference type="SMR" id="B7IT24"/>
<dbReference type="GeneID" id="92887808"/>
<dbReference type="KEGG" id="bcg:BCG9842_B5190"/>
<dbReference type="HOGENOM" id="CLU_083987_3_3_9"/>
<dbReference type="Proteomes" id="UP000006744">
    <property type="component" value="Chromosome"/>
</dbReference>
<dbReference type="GO" id="GO:0022625">
    <property type="term" value="C:cytosolic large ribosomal subunit"/>
    <property type="evidence" value="ECO:0007669"/>
    <property type="project" value="TreeGrafter"/>
</dbReference>
<dbReference type="GO" id="GO:0019843">
    <property type="term" value="F:rRNA binding"/>
    <property type="evidence" value="ECO:0007669"/>
    <property type="project" value="UniProtKB-UniRule"/>
</dbReference>
<dbReference type="GO" id="GO:0003735">
    <property type="term" value="F:structural constituent of ribosome"/>
    <property type="evidence" value="ECO:0007669"/>
    <property type="project" value="InterPro"/>
</dbReference>
<dbReference type="GO" id="GO:0006412">
    <property type="term" value="P:translation"/>
    <property type="evidence" value="ECO:0007669"/>
    <property type="project" value="UniProtKB-UniRule"/>
</dbReference>
<dbReference type="CDD" id="cd00336">
    <property type="entry name" value="Ribosomal_L22"/>
    <property type="match status" value="1"/>
</dbReference>
<dbReference type="FunFam" id="3.90.470.10:FF:000001">
    <property type="entry name" value="50S ribosomal protein L22"/>
    <property type="match status" value="1"/>
</dbReference>
<dbReference type="Gene3D" id="3.90.470.10">
    <property type="entry name" value="Ribosomal protein L22/L17"/>
    <property type="match status" value="1"/>
</dbReference>
<dbReference type="HAMAP" id="MF_01331_B">
    <property type="entry name" value="Ribosomal_uL22_B"/>
    <property type="match status" value="1"/>
</dbReference>
<dbReference type="InterPro" id="IPR001063">
    <property type="entry name" value="Ribosomal_uL22"/>
</dbReference>
<dbReference type="InterPro" id="IPR005727">
    <property type="entry name" value="Ribosomal_uL22_bac/chlpt-type"/>
</dbReference>
<dbReference type="InterPro" id="IPR047867">
    <property type="entry name" value="Ribosomal_uL22_bac/org-type"/>
</dbReference>
<dbReference type="InterPro" id="IPR018260">
    <property type="entry name" value="Ribosomal_uL22_CS"/>
</dbReference>
<dbReference type="InterPro" id="IPR036394">
    <property type="entry name" value="Ribosomal_uL22_sf"/>
</dbReference>
<dbReference type="NCBIfam" id="TIGR01044">
    <property type="entry name" value="rplV_bact"/>
    <property type="match status" value="1"/>
</dbReference>
<dbReference type="PANTHER" id="PTHR13501">
    <property type="entry name" value="CHLOROPLAST 50S RIBOSOMAL PROTEIN L22-RELATED"/>
    <property type="match status" value="1"/>
</dbReference>
<dbReference type="PANTHER" id="PTHR13501:SF8">
    <property type="entry name" value="LARGE RIBOSOMAL SUBUNIT PROTEIN UL22M"/>
    <property type="match status" value="1"/>
</dbReference>
<dbReference type="Pfam" id="PF00237">
    <property type="entry name" value="Ribosomal_L22"/>
    <property type="match status" value="1"/>
</dbReference>
<dbReference type="SUPFAM" id="SSF54843">
    <property type="entry name" value="Ribosomal protein L22"/>
    <property type="match status" value="1"/>
</dbReference>
<dbReference type="PROSITE" id="PS00464">
    <property type="entry name" value="RIBOSOMAL_L22"/>
    <property type="match status" value="1"/>
</dbReference>
<name>RL22_BACC2</name>
<feature type="chain" id="PRO_1000142228" description="Large ribosomal subunit protein uL22">
    <location>
        <begin position="1"/>
        <end position="113"/>
    </location>
</feature>
<keyword id="KW-0687">Ribonucleoprotein</keyword>
<keyword id="KW-0689">Ribosomal protein</keyword>
<keyword id="KW-0694">RNA-binding</keyword>
<keyword id="KW-0699">rRNA-binding</keyword>
<accession>B7IT24</accession>
<comment type="function">
    <text evidence="1">This protein binds specifically to 23S rRNA; its binding is stimulated by other ribosomal proteins, e.g. L4, L17, and L20. It is important during the early stages of 50S assembly. It makes multiple contacts with different domains of the 23S rRNA in the assembled 50S subunit and ribosome (By similarity).</text>
</comment>
<comment type="function">
    <text evidence="1">The globular domain of the protein is located near the polypeptide exit tunnel on the outside of the subunit, while an extended beta-hairpin is found that lines the wall of the exit tunnel in the center of the 70S ribosome.</text>
</comment>
<comment type="subunit">
    <text evidence="1">Part of the 50S ribosomal subunit.</text>
</comment>
<comment type="similarity">
    <text evidence="1">Belongs to the universal ribosomal protein uL22 family.</text>
</comment>
<organism>
    <name type="scientific">Bacillus cereus (strain G9842)</name>
    <dbReference type="NCBI Taxonomy" id="405531"/>
    <lineage>
        <taxon>Bacteria</taxon>
        <taxon>Bacillati</taxon>
        <taxon>Bacillota</taxon>
        <taxon>Bacilli</taxon>
        <taxon>Bacillales</taxon>
        <taxon>Bacillaceae</taxon>
        <taxon>Bacillus</taxon>
        <taxon>Bacillus cereus group</taxon>
    </lineage>
</organism>
<evidence type="ECO:0000255" key="1">
    <source>
        <dbReference type="HAMAP-Rule" id="MF_01331"/>
    </source>
</evidence>
<evidence type="ECO:0000305" key="2"/>
<sequence length="113" mass="12536">MQAKAVARTVRIAPRKVRLVVDLIRGKQVGEAIAILNHTPKTASPVVEKVLKSAIANAEHNYEMDINNLVVEKVFVDEGPTLKRFRPRAMGRASQINKRTSHITVVVSEKKEG</sequence>
<protein>
    <recommendedName>
        <fullName evidence="1">Large ribosomal subunit protein uL22</fullName>
    </recommendedName>
    <alternativeName>
        <fullName evidence="2">50S ribosomal protein L22</fullName>
    </alternativeName>
</protein>
<proteinExistence type="inferred from homology"/>